<dbReference type="EMBL" id="AY181249">
    <property type="protein sequence ID" value="AAO25609.1"/>
    <property type="molecule type" value="Genomic_DNA"/>
</dbReference>
<dbReference type="EMBL" id="CR380954">
    <property type="protein sequence ID" value="CAG59860.1"/>
    <property type="molecule type" value="Genomic_DNA"/>
</dbReference>
<dbReference type="RefSeq" id="XP_446927.1">
    <property type="nucleotide sequence ID" value="XM_446927.1"/>
</dbReference>
<dbReference type="SMR" id="Q874M2"/>
<dbReference type="FunCoup" id="Q874M2">
    <property type="interactions" value="621"/>
</dbReference>
<dbReference type="STRING" id="284593.Q874M2"/>
<dbReference type="EnsemblFungi" id="CAGL0H03091g-T">
    <property type="protein sequence ID" value="CAGL0H03091g-T-p1"/>
    <property type="gene ID" value="CAGL0H03091g"/>
</dbReference>
<dbReference type="KEGG" id="cgr:2888580"/>
<dbReference type="CGD" id="CAL0129625">
    <property type="gene designation" value="CAGL0H03091g"/>
</dbReference>
<dbReference type="VEuPathDB" id="FungiDB:CAGL0H03091g"/>
<dbReference type="eggNOG" id="KOG3022">
    <property type="taxonomic scope" value="Eukaryota"/>
</dbReference>
<dbReference type="HOGENOM" id="CLU_024839_0_1_1"/>
<dbReference type="InParanoid" id="Q874M2"/>
<dbReference type="OMA" id="VSGCPMR"/>
<dbReference type="Proteomes" id="UP000002428">
    <property type="component" value="Chromosome H"/>
</dbReference>
<dbReference type="GO" id="GO:1904564">
    <property type="term" value="C:cytosolic [4Fe-4S] assembly scaffold complex"/>
    <property type="evidence" value="ECO:0007669"/>
    <property type="project" value="EnsemblFungi"/>
</dbReference>
<dbReference type="GO" id="GO:0005634">
    <property type="term" value="C:nucleus"/>
    <property type="evidence" value="ECO:0007669"/>
    <property type="project" value="UniProtKB-SubCell"/>
</dbReference>
<dbReference type="GO" id="GO:0051539">
    <property type="term" value="F:4 iron, 4 sulfur cluster binding"/>
    <property type="evidence" value="ECO:0007669"/>
    <property type="project" value="UniProtKB-UniRule"/>
</dbReference>
<dbReference type="GO" id="GO:0005524">
    <property type="term" value="F:ATP binding"/>
    <property type="evidence" value="ECO:0007669"/>
    <property type="project" value="UniProtKB-KW"/>
</dbReference>
<dbReference type="GO" id="GO:0016887">
    <property type="term" value="F:ATP hydrolysis activity"/>
    <property type="evidence" value="ECO:0007669"/>
    <property type="project" value="EnsemblFungi"/>
</dbReference>
<dbReference type="GO" id="GO:0140663">
    <property type="term" value="F:ATP-dependent FeS chaperone activity"/>
    <property type="evidence" value="ECO:0007669"/>
    <property type="project" value="InterPro"/>
</dbReference>
<dbReference type="GO" id="GO:0005506">
    <property type="term" value="F:iron ion binding"/>
    <property type="evidence" value="ECO:0007669"/>
    <property type="project" value="EnsemblFungi"/>
</dbReference>
<dbReference type="GO" id="GO:0016226">
    <property type="term" value="P:iron-sulfur cluster assembly"/>
    <property type="evidence" value="ECO:0007669"/>
    <property type="project" value="UniProtKB-UniRule"/>
</dbReference>
<dbReference type="GO" id="GO:0002098">
    <property type="term" value="P:tRNA wobble uridine modification"/>
    <property type="evidence" value="ECO:0007669"/>
    <property type="project" value="EnsemblFungi"/>
</dbReference>
<dbReference type="CDD" id="cd02037">
    <property type="entry name" value="Mrp_NBP35"/>
    <property type="match status" value="1"/>
</dbReference>
<dbReference type="FunFam" id="3.40.50.300:FF:000427">
    <property type="entry name" value="Cytosolic Fe-S cluster assembly factor NUBP1"/>
    <property type="match status" value="1"/>
</dbReference>
<dbReference type="Gene3D" id="3.40.50.300">
    <property type="entry name" value="P-loop containing nucleotide triphosphate hydrolases"/>
    <property type="match status" value="1"/>
</dbReference>
<dbReference type="HAMAP" id="MF_02040">
    <property type="entry name" value="Mrp_NBP35"/>
    <property type="match status" value="1"/>
</dbReference>
<dbReference type="HAMAP" id="MF_03038">
    <property type="entry name" value="NUBP1"/>
    <property type="match status" value="1"/>
</dbReference>
<dbReference type="InterPro" id="IPR000808">
    <property type="entry name" value="Mrp-like_CS"/>
</dbReference>
<dbReference type="InterPro" id="IPR019591">
    <property type="entry name" value="Mrp/NBP35_ATP-bd"/>
</dbReference>
<dbReference type="InterPro" id="IPR028601">
    <property type="entry name" value="NUBP1/Nbp35"/>
</dbReference>
<dbReference type="InterPro" id="IPR027417">
    <property type="entry name" value="P-loop_NTPase"/>
</dbReference>
<dbReference type="InterPro" id="IPR033756">
    <property type="entry name" value="YlxH/NBP35"/>
</dbReference>
<dbReference type="PANTHER" id="PTHR23264:SF35">
    <property type="entry name" value="CYTOSOLIC FE-S CLUSTER ASSEMBLY FACTOR NUBP1"/>
    <property type="match status" value="1"/>
</dbReference>
<dbReference type="PANTHER" id="PTHR23264">
    <property type="entry name" value="NUCLEOTIDE-BINDING PROTEIN NBP35 YEAST -RELATED"/>
    <property type="match status" value="1"/>
</dbReference>
<dbReference type="Pfam" id="PF10609">
    <property type="entry name" value="ParA"/>
    <property type="match status" value="1"/>
</dbReference>
<dbReference type="SUPFAM" id="SSF52540">
    <property type="entry name" value="P-loop containing nucleoside triphosphate hydrolases"/>
    <property type="match status" value="1"/>
</dbReference>
<dbReference type="PROSITE" id="PS01215">
    <property type="entry name" value="MRP"/>
    <property type="match status" value="1"/>
</dbReference>
<comment type="function">
    <text evidence="1">Component of the cytosolic iron-sulfur (Fe/S) protein assembly (CIA) machinery. Required for maturation of extramitochondrial Fe-S proteins. The NBP35-CFD1 heterotetramer forms a Fe-S scaffold complex, mediating the de novo assembly of an Fe-S cluster and its transfer to target apoproteins. Required for biogenesis and export of both ribosomal subunits, which may reflect a role in assembly of the Fe/S clusters in RLI1, a protein which performs rRNA processing and ribosome export.</text>
</comment>
<comment type="cofactor">
    <cofactor evidence="1">
        <name>[4Fe-4S] cluster</name>
        <dbReference type="ChEBI" id="CHEBI:49883"/>
    </cofactor>
    <text evidence="1">Binds 4 [4Fe-4S] clusters per heterotetramer. Contains two stable clusters in the N-termini of NBP35 and two labile, bridging clusters between subunits of the NBP35-CFD1 heterotetramer.</text>
</comment>
<comment type="subunit">
    <text evidence="1">Heterotetramer of 2 NBP35 and 2 CFD1 chains.</text>
</comment>
<comment type="subcellular location">
    <subcellularLocation>
        <location evidence="1">Cytoplasm</location>
    </subcellularLocation>
    <subcellularLocation>
        <location evidence="1">Nucleus</location>
    </subcellularLocation>
</comment>
<comment type="similarity">
    <text evidence="1">Belongs to the Mrp/NBP35 ATP-binding proteins family. NUBP1/NBP35 subfamily.</text>
</comment>
<accession>Q874M2</accession>
<accession>Q6FS67</accession>
<feature type="chain" id="PRO_0000278892" description="Cytosolic Fe-S cluster assembly factor NBP35">
    <location>
        <begin position="1"/>
        <end position="334"/>
    </location>
</feature>
<feature type="binding site" evidence="1">
    <location>
        <position position="33"/>
    </location>
    <ligand>
        <name>[4Fe-4S] cluster</name>
        <dbReference type="ChEBI" id="CHEBI:49883"/>
        <label>1</label>
    </ligand>
</feature>
<feature type="binding site" evidence="1">
    <location>
        <position position="47"/>
    </location>
    <ligand>
        <name>[4Fe-4S] cluster</name>
        <dbReference type="ChEBI" id="CHEBI:49883"/>
        <label>1</label>
    </ligand>
</feature>
<feature type="binding site" evidence="1">
    <location>
        <position position="50"/>
    </location>
    <ligand>
        <name>[4Fe-4S] cluster</name>
        <dbReference type="ChEBI" id="CHEBI:49883"/>
        <label>1</label>
    </ligand>
</feature>
<feature type="binding site" evidence="1">
    <location>
        <position position="56"/>
    </location>
    <ligand>
        <name>[4Fe-4S] cluster</name>
        <dbReference type="ChEBI" id="CHEBI:49883"/>
        <label>1</label>
    </ligand>
</feature>
<feature type="binding site" evidence="1">
    <location>
        <begin position="86"/>
        <end position="93"/>
    </location>
    <ligand>
        <name>ATP</name>
        <dbReference type="ChEBI" id="CHEBI:30616"/>
    </ligand>
</feature>
<feature type="binding site" evidence="1">
    <location>
        <position position="259"/>
    </location>
    <ligand>
        <name>[4Fe-4S] cluster</name>
        <dbReference type="ChEBI" id="CHEBI:49883"/>
        <label>2</label>
        <note>ligand shared with heterodimeric partner</note>
    </ligand>
</feature>
<feature type="binding site" evidence="1">
    <location>
        <position position="262"/>
    </location>
    <ligand>
        <name>[4Fe-4S] cluster</name>
        <dbReference type="ChEBI" id="CHEBI:49883"/>
        <label>2</label>
        <note>ligand shared with heterodimeric partner</note>
    </ligand>
</feature>
<reference key="1">
    <citation type="journal article" date="2003" name="Genome Biol.">
        <title>Evidence from comparative genomics for a complete sexual cycle in the 'asexual' pathogenic yeast Candida glabrata.</title>
        <authorList>
            <person name="Wong S."/>
            <person name="Fares M.A."/>
            <person name="Zimmermann W."/>
            <person name="Butler G."/>
            <person name="Wolfe K.H."/>
        </authorList>
    </citation>
    <scope>NUCLEOTIDE SEQUENCE [GENOMIC DNA]</scope>
    <source>
        <strain>ATCC 2001 / BCRC 20586 / JCM 3761 / NBRC 0622 / NRRL Y-65 / CBS 138</strain>
    </source>
</reference>
<reference key="2">
    <citation type="journal article" date="2004" name="Nature">
        <title>Genome evolution in yeasts.</title>
        <authorList>
            <person name="Dujon B."/>
            <person name="Sherman D."/>
            <person name="Fischer G."/>
            <person name="Durrens P."/>
            <person name="Casaregola S."/>
            <person name="Lafontaine I."/>
            <person name="de Montigny J."/>
            <person name="Marck C."/>
            <person name="Neuveglise C."/>
            <person name="Talla E."/>
            <person name="Goffard N."/>
            <person name="Frangeul L."/>
            <person name="Aigle M."/>
            <person name="Anthouard V."/>
            <person name="Babour A."/>
            <person name="Barbe V."/>
            <person name="Barnay S."/>
            <person name="Blanchin S."/>
            <person name="Beckerich J.-M."/>
            <person name="Beyne E."/>
            <person name="Bleykasten C."/>
            <person name="Boisrame A."/>
            <person name="Boyer J."/>
            <person name="Cattolico L."/>
            <person name="Confanioleri F."/>
            <person name="de Daruvar A."/>
            <person name="Despons L."/>
            <person name="Fabre E."/>
            <person name="Fairhead C."/>
            <person name="Ferry-Dumazet H."/>
            <person name="Groppi A."/>
            <person name="Hantraye F."/>
            <person name="Hennequin C."/>
            <person name="Jauniaux N."/>
            <person name="Joyet P."/>
            <person name="Kachouri R."/>
            <person name="Kerrest A."/>
            <person name="Koszul R."/>
            <person name="Lemaire M."/>
            <person name="Lesur I."/>
            <person name="Ma L."/>
            <person name="Muller H."/>
            <person name="Nicaud J.-M."/>
            <person name="Nikolski M."/>
            <person name="Oztas S."/>
            <person name="Ozier-Kalogeropoulos O."/>
            <person name="Pellenz S."/>
            <person name="Potier S."/>
            <person name="Richard G.-F."/>
            <person name="Straub M.-L."/>
            <person name="Suleau A."/>
            <person name="Swennen D."/>
            <person name="Tekaia F."/>
            <person name="Wesolowski-Louvel M."/>
            <person name="Westhof E."/>
            <person name="Wirth B."/>
            <person name="Zeniou-Meyer M."/>
            <person name="Zivanovic Y."/>
            <person name="Bolotin-Fukuhara M."/>
            <person name="Thierry A."/>
            <person name="Bouchier C."/>
            <person name="Caudron B."/>
            <person name="Scarpelli C."/>
            <person name="Gaillardin C."/>
            <person name="Weissenbach J."/>
            <person name="Wincker P."/>
            <person name="Souciet J.-L."/>
        </authorList>
    </citation>
    <scope>NUCLEOTIDE SEQUENCE [LARGE SCALE GENOMIC DNA]</scope>
    <source>
        <strain>ATCC 2001 / BCRC 20586 / JCM 3761 / NBRC 0622 / NRRL Y-65 / CBS 138</strain>
    </source>
</reference>
<proteinExistence type="inferred from homology"/>
<organism>
    <name type="scientific">Candida glabrata (strain ATCC 2001 / BCRC 20586 / JCM 3761 / NBRC 0622 / NRRL Y-65 / CBS 138)</name>
    <name type="common">Yeast</name>
    <name type="synonym">Nakaseomyces glabratus</name>
    <dbReference type="NCBI Taxonomy" id="284593"/>
    <lineage>
        <taxon>Eukaryota</taxon>
        <taxon>Fungi</taxon>
        <taxon>Dikarya</taxon>
        <taxon>Ascomycota</taxon>
        <taxon>Saccharomycotina</taxon>
        <taxon>Saccharomycetes</taxon>
        <taxon>Saccharomycetales</taxon>
        <taxon>Saccharomycetaceae</taxon>
        <taxon>Nakaseomyces</taxon>
    </lineage>
</organism>
<name>NBP35_CANGA</name>
<evidence type="ECO:0000255" key="1">
    <source>
        <dbReference type="HAMAP-Rule" id="MF_03038"/>
    </source>
</evidence>
<protein>
    <recommendedName>
        <fullName evidence="1">Cytosolic Fe-S cluster assembly factor NBP35</fullName>
    </recommendedName>
    <alternativeName>
        <fullName evidence="1">Nucleotide-binding protein 35</fullName>
    </alternativeName>
</protein>
<keyword id="KW-0004">4Fe-4S</keyword>
<keyword id="KW-0067">ATP-binding</keyword>
<keyword id="KW-0963">Cytoplasm</keyword>
<keyword id="KW-0408">Iron</keyword>
<keyword id="KW-0411">Iron-sulfur</keyword>
<keyword id="KW-0479">Metal-binding</keyword>
<keyword id="KW-0547">Nucleotide-binding</keyword>
<keyword id="KW-0539">Nucleus</keyword>
<keyword id="KW-1185">Reference proteome</keyword>
<sequence>MSTEVISTSVVSEPTQEILPAEYSLDAPEPEHCPGPESEMAGKADACQTCENKDICESLPKGPDPDIPLITENLSGIKHKILVLSGKGGVGKSTFTTMLSWALSADDNLQVGAMDLDICGPSLPHMLGCTDEVVHESNTGWTPVYVAENLAAMSIQFMLPEDDSAVIWRGNKKNLLIKKFLKDVVWDDLDYLVVDTPPGTSDEHISINKYMKESGIDGALVVTTPQEVALLDVRKEIDFCRKAGINILGLVENMSGFVCPNCKGESQIFKPTTGGGEALCKELGIKFLGSVPLDPRIGRCSDEGESFLDEFPDSPATLAVLNVVEELRDAVGDV</sequence>
<gene>
    <name evidence="1" type="primary">NBP35</name>
    <name type="ordered locus">CAGL0H03091g</name>
</gene>